<name>HFBF_PENEN</name>
<organism>
    <name type="scientific">Penicillium expansum</name>
    <name type="common">Blue mold rot fungus</name>
    <dbReference type="NCBI Taxonomy" id="27334"/>
    <lineage>
        <taxon>Eukaryota</taxon>
        <taxon>Fungi</taxon>
        <taxon>Dikarya</taxon>
        <taxon>Ascomycota</taxon>
        <taxon>Pezizomycotina</taxon>
        <taxon>Eurotiomycetes</taxon>
        <taxon>Eurotiomycetidae</taxon>
        <taxon>Eurotiales</taxon>
        <taxon>Aspergillaceae</taxon>
        <taxon>Penicillium</taxon>
    </lineage>
</organism>
<comment type="function">
    <text evidence="3 5">Aerial growth, conidiation, and dispersal of filamentous fungi in the environment rely upon a capability of their secreting small amphipathic proteins called hydrophobins (HPBs) with low sequence identity. Class I can self-assemble into an outermost layer of rodlet bundles on aerial cell surfaces, conferring cellular hydrophobicity that supports fungal growth, development and dispersal; whereas Class II form highly ordered films at water-air interfaces through intermolecular interactions but contribute nothing to the rodlet structure (Probable). In P.expansum, hydrophobins contribute to germination, tolerance to cold stress and mycotoxins patulin and citrinin production (PubMed:36374077). HfbC, HfbD, HfbE, and HfbF have functional redundancy in fungal surface hydrophobicity (PubMed:36374077).</text>
</comment>
<comment type="subcellular location">
    <subcellularLocation>
        <location evidence="5">Secreted</location>
    </subcellularLocation>
    <subcellularLocation>
        <location evidence="5">Secreted</location>
        <location evidence="5">Cell wall</location>
    </subcellularLocation>
</comment>
<comment type="disruption phenotype">
    <text evidence="3">Affects hydrophobicity only when HfbC, HfbD and HfbE are also deleted (PubMed:36374077). Disruption of all 7 hydrophobins leads to altered germination kinetics, decreased survival under exposure to extreme cold stress and increased mycotoxins patulin and citrinin production (PubMed:36374077).</text>
</comment>
<proteinExistence type="inferred from homology"/>
<gene>
    <name evidence="4" type="primary">HfbF</name>
    <name type="ORF">PEX2_004990</name>
</gene>
<sequence>MRVSALAFAAVLSLVSAKKINMHCNFAEDHTGMVQQPYCCRDLVPARGNSKANEALDCDQLDQPQLCDDQSRPACCYTIGAKKICTSHVIFQDAEDV</sequence>
<protein>
    <recommendedName>
        <fullName evidence="4">Unclassified hydrophobin F</fullName>
    </recommendedName>
</protein>
<feature type="signal peptide" evidence="2">
    <location>
        <begin position="1"/>
        <end position="17"/>
    </location>
</feature>
<feature type="chain" id="PRO_5009752644" description="Unclassified hydrophobin F">
    <location>
        <begin position="18"/>
        <end position="97"/>
    </location>
</feature>
<feature type="disulfide bond" evidence="1">
    <location>
        <begin position="24"/>
        <end position="75"/>
    </location>
</feature>
<feature type="disulfide bond" evidence="1">
    <location>
        <begin position="39"/>
        <end position="67"/>
    </location>
</feature>
<feature type="disulfide bond" evidence="1">
    <location>
        <begin position="40"/>
        <end position="58"/>
    </location>
</feature>
<feature type="disulfide bond" evidence="1">
    <location>
        <begin position="76"/>
        <end position="85"/>
    </location>
</feature>
<accession>A0A0A2JK41</accession>
<evidence type="ECO:0000250" key="1">
    <source>
        <dbReference type="UniProtKB" id="P52754"/>
    </source>
</evidence>
<evidence type="ECO:0000255" key="2"/>
<evidence type="ECO:0000269" key="3">
    <source>
    </source>
</evidence>
<evidence type="ECO:0000303" key="4">
    <source>
    </source>
</evidence>
<evidence type="ECO:0000305" key="5">
    <source>
    </source>
</evidence>
<dbReference type="EMBL" id="JQFZ01000182">
    <property type="protein sequence ID" value="KGO55739.1"/>
    <property type="molecule type" value="Genomic_DNA"/>
</dbReference>
<dbReference type="RefSeq" id="XP_016597750.1">
    <property type="nucleotide sequence ID" value="XM_016737776.1"/>
</dbReference>
<dbReference type="GeneID" id="27673195"/>
<dbReference type="VEuPathDB" id="FungiDB:PEXP_043320"/>
<dbReference type="HOGENOM" id="CLU_176407_0_0_1"/>
<dbReference type="OrthoDB" id="4269539at2759"/>
<dbReference type="PhylomeDB" id="A0A0A2JK41"/>
<dbReference type="Proteomes" id="UP000030143">
    <property type="component" value="Unassembled WGS sequence"/>
</dbReference>
<keyword id="KW-0134">Cell wall</keyword>
<keyword id="KW-1015">Disulfide bond</keyword>
<keyword id="KW-1185">Reference proteome</keyword>
<keyword id="KW-0964">Secreted</keyword>
<keyword id="KW-0732">Signal</keyword>
<reference key="1">
    <citation type="journal article" date="2015" name="Mol. Plant Microbe Interact.">
        <title>Genome, transcriptome, and functional analyses of Penicillium expansum provide new insights into secondary metabolism and pathogenicity.</title>
        <authorList>
            <person name="Ballester A.R."/>
            <person name="Marcet-Houben M."/>
            <person name="Levin E."/>
            <person name="Sela N."/>
            <person name="Selma-Lazaro C."/>
            <person name="Carmona L."/>
            <person name="Wisniewski M."/>
            <person name="Droby S."/>
            <person name="Gonzalez-Candelas L."/>
            <person name="Gabaldon T."/>
        </authorList>
    </citation>
    <scope>NUCLEOTIDE SEQUENCE [LARGE SCALE GENOMIC DNA]</scope>
    <source>
        <strain>MD-8</strain>
    </source>
</reference>
<reference key="2">
    <citation type="journal article" date="2022" name="MBio">
        <title>The Hydrophobin Gene Family Confers a Fitness Trade-off between Spore Dispersal and Host Colonization in Penicillium expansum.</title>
        <authorList>
            <person name="Luciano-Rosario D."/>
            <person name="Eagan J.L."/>
            <person name="Aryal N."/>
            <person name="Dominguez E.G."/>
            <person name="Hull C.M."/>
            <person name="Keller N.P."/>
        </authorList>
    </citation>
    <scope>FUNCTION</scope>
    <scope>DISRUPTION PHENOTYPE</scope>
</reference>